<name>ZP3_RAT</name>
<accession>P97708</accession>
<accession>O55084</accession>
<organism>
    <name type="scientific">Rattus norvegicus</name>
    <name type="common">Rat</name>
    <dbReference type="NCBI Taxonomy" id="10116"/>
    <lineage>
        <taxon>Eukaryota</taxon>
        <taxon>Metazoa</taxon>
        <taxon>Chordata</taxon>
        <taxon>Craniata</taxon>
        <taxon>Vertebrata</taxon>
        <taxon>Euteleostomi</taxon>
        <taxon>Mammalia</taxon>
        <taxon>Eutheria</taxon>
        <taxon>Euarchontoglires</taxon>
        <taxon>Glires</taxon>
        <taxon>Rodentia</taxon>
        <taxon>Myomorpha</taxon>
        <taxon>Muroidea</taxon>
        <taxon>Muridae</taxon>
        <taxon>Murinae</taxon>
        <taxon>Rattus</taxon>
    </lineage>
</organism>
<evidence type="ECO:0000250" key="1"/>
<evidence type="ECO:0000250" key="2">
    <source>
        <dbReference type="UniProtKB" id="P20239"/>
    </source>
</evidence>
<evidence type="ECO:0000250" key="3">
    <source>
        <dbReference type="UniProtKB" id="P21754"/>
    </source>
</evidence>
<evidence type="ECO:0000250" key="4">
    <source>
        <dbReference type="UniProtKB" id="P48833"/>
    </source>
</evidence>
<evidence type="ECO:0000255" key="5"/>
<evidence type="ECO:0000255" key="6">
    <source>
        <dbReference type="PROSITE-ProRule" id="PRU00375"/>
    </source>
</evidence>
<evidence type="ECO:0000269" key="7">
    <source>
    </source>
</evidence>
<evidence type="ECO:0000305" key="8"/>
<gene>
    <name type="primary">Zp3</name>
    <name type="synonym">Zp-3</name>
    <name type="synonym">Zpc</name>
</gene>
<reference key="1">
    <citation type="journal article" date="1996" name="J. Reprod. Fertil. Abstr. Ser.">
        <title>Molecular characterisation of zona pellucida protein 3 (ZP3) in the rat.</title>
        <authorList>
            <person name="MacDuff P.E."/>
            <person name="Kerr L.E."/>
            <person name="Aitken R.J."/>
        </authorList>
    </citation>
    <scope>NUCLEOTIDE SEQUENCE [MRNA]</scope>
    <source>
        <strain>Wistar</strain>
        <tissue>Ovary</tissue>
    </source>
</reference>
<reference key="2">
    <citation type="journal article" date="1998" name="Mol. Reprod. Dev.">
        <title>Rat zona pellucida glycoproteins: molecular cloning and characterization of the three major components.</title>
        <authorList>
            <person name="Akatsuka K."/>
            <person name="Yoshida-Komiya H."/>
            <person name="Tulsiani D.R.P."/>
            <person name="Orgebin-Crist M.-C."/>
            <person name="Hiroi M."/>
            <person name="Araki Y."/>
        </authorList>
    </citation>
    <scope>NUCLEOTIDE SEQUENCE [MRNA]</scope>
    <scope>PROTEIN SEQUENCE OF 57-63</scope>
    <scope>GLYCOSYLATION</scope>
    <source>
        <strain>Sprague-Dawley</strain>
        <tissue>Ovary</tissue>
    </source>
</reference>
<reference key="3">
    <citation type="journal article" date="2005" name="Biochemistry">
        <title>Structural conservation of mouse and rat zona pellucida glycoproteins. Probing the native rat zona pellucida proteome by mass spectrometry.</title>
        <authorList>
            <person name="Boja E.S."/>
            <person name="Hoodbhoy T."/>
            <person name="Garfield M."/>
            <person name="Fales H.M."/>
        </authorList>
    </citation>
    <scope>PROTEIN SEQUENCE OF C-TERMINUS</scope>
    <scope>PYROGLUTAMATE FORMATION AT GLN-23</scope>
    <scope>DISULFIDE BOND FORMATION AT 78-CYS--CYS-98; 216-CYS--CYS-283 AND 240-CYS--CYS-301</scope>
    <scope>GLYCOSYLATION AT ASN-146; ASN-273; ASN-304 AND ASN-330</scope>
    <scope>IDENTIFICATION BY MASS SPECTROMETRY</scope>
</reference>
<feature type="signal peptide" evidence="1">
    <location>
        <begin position="1"/>
        <end position="22"/>
    </location>
</feature>
<feature type="chain" id="PRO_0000041721" description="Zona pellucida sperm-binding protein 3">
    <location>
        <begin position="23"/>
        <end position="351"/>
    </location>
</feature>
<feature type="chain" id="PRO_0000304575" description="Processed zona pellucida sperm-binding protein 3">
    <location>
        <begin position="23"/>
        <end status="unknown"/>
    </location>
</feature>
<feature type="propeptide" id="PRO_0000041722" description="Removed in mature form" evidence="7">
    <location>
        <begin position="352"/>
        <end position="424"/>
    </location>
</feature>
<feature type="topological domain" description="Extracellular" evidence="5">
    <location>
        <begin position="23"/>
        <end position="387"/>
    </location>
</feature>
<feature type="transmembrane region" description="Helical" evidence="5">
    <location>
        <begin position="388"/>
        <end position="408"/>
    </location>
</feature>
<feature type="topological domain" description="Cytoplasmic" evidence="5">
    <location>
        <begin position="409"/>
        <end position="424"/>
    </location>
</feature>
<feature type="domain" description="ZP" evidence="6">
    <location>
        <begin position="45"/>
        <end position="308"/>
    </location>
</feature>
<feature type="modified residue" description="Pyrrolidone carboxylic acid" evidence="7">
    <location>
        <position position="23"/>
    </location>
</feature>
<feature type="glycosylation site" description="O-linked (GalNAc...) threonine" evidence="1">
    <location>
        <position position="32"/>
    </location>
</feature>
<feature type="glycosylation site" description="O-linked (GalNAc...) threonine" evidence="1">
    <location>
        <position position="34"/>
    </location>
</feature>
<feature type="glycosylation site" description="O-linked (GalNAc...) serine" evidence="1">
    <location>
        <position position="39"/>
    </location>
</feature>
<feature type="glycosylation site" description="N-linked (GlcNAc...) asparagine" evidence="7">
    <location>
        <position position="146"/>
    </location>
</feature>
<feature type="glycosylation site" description="O-linked (GalNAc...) threonine" evidence="1">
    <location>
        <position position="155"/>
    </location>
</feature>
<feature type="glycosylation site" description="O-linked (GalNAc...) threonine" evidence="1">
    <location>
        <position position="162"/>
    </location>
</feature>
<feature type="glycosylation site" description="N-linked (GlcNAc...) asparagine" evidence="7">
    <location>
        <position position="273"/>
    </location>
</feature>
<feature type="glycosylation site" description="N-linked (GlcNAc...) asparagine" evidence="7">
    <location>
        <position position="304"/>
    </location>
</feature>
<feature type="glycosylation site" description="N-linked (GlcNAc...) asparagine" evidence="1">
    <location>
        <position position="327"/>
    </location>
</feature>
<feature type="glycosylation site" description="N-linked (GlcNAc...) asparagine" evidence="7">
    <location>
        <position position="330"/>
    </location>
</feature>
<feature type="disulfide bond" evidence="1">
    <location>
        <begin position="46"/>
        <end position="139"/>
    </location>
</feature>
<feature type="disulfide bond" evidence="7">
    <location>
        <begin position="78"/>
        <end position="98"/>
    </location>
</feature>
<feature type="disulfide bond" evidence="7">
    <location>
        <begin position="216"/>
        <end position="283"/>
    </location>
</feature>
<feature type="disulfide bond" evidence="7">
    <location>
        <begin position="240"/>
        <end position="301"/>
    </location>
</feature>
<feature type="sequence conflict" description="In Ref. 2; BAA24456." evidence="8" ref="2">
    <original>V</original>
    <variation>A</variation>
    <location>
        <position position="55"/>
    </location>
</feature>
<feature type="sequence conflict" description="In Ref. 2; BAA24456." evidence="8" ref="2">
    <original>N</original>
    <variation>S</variation>
    <location>
        <position position="112"/>
    </location>
</feature>
<feature type="sequence conflict" description="In Ref. 2; BAA24456." evidence="8" ref="2">
    <original>K</original>
    <variation>M</variation>
    <location>
        <position position="412"/>
    </location>
</feature>
<dbReference type="EMBL" id="Y10823">
    <property type="protein sequence ID" value="CAA71787.1"/>
    <property type="molecule type" value="mRNA"/>
</dbReference>
<dbReference type="EMBL" id="D78482">
    <property type="protein sequence ID" value="BAA24456.1"/>
    <property type="molecule type" value="mRNA"/>
</dbReference>
<dbReference type="RefSeq" id="NP_446214.1">
    <property type="nucleotide sequence ID" value="NM_053762.1"/>
</dbReference>
<dbReference type="SMR" id="P97708"/>
<dbReference type="FunCoup" id="P97708">
    <property type="interactions" value="34"/>
</dbReference>
<dbReference type="STRING" id="10116.ENSRNOP00000001952"/>
<dbReference type="GlyCosmos" id="P97708">
    <property type="glycosylation" value="10 sites, No reported glycans"/>
</dbReference>
<dbReference type="GlyGen" id="P97708">
    <property type="glycosylation" value="10 sites"/>
</dbReference>
<dbReference type="iPTMnet" id="P97708"/>
<dbReference type="PhosphoSitePlus" id="P97708"/>
<dbReference type="PaxDb" id="10116-ENSRNOP00000001952"/>
<dbReference type="GeneID" id="114639"/>
<dbReference type="KEGG" id="rno:114639"/>
<dbReference type="UCSC" id="RGD:620606">
    <property type="organism name" value="rat"/>
</dbReference>
<dbReference type="AGR" id="RGD:620606"/>
<dbReference type="CTD" id="7784"/>
<dbReference type="RGD" id="620606">
    <property type="gene designation" value="Zp3"/>
</dbReference>
<dbReference type="eggNOG" id="ENOG502QSZF">
    <property type="taxonomic scope" value="Eukaryota"/>
</dbReference>
<dbReference type="InParanoid" id="P97708"/>
<dbReference type="OrthoDB" id="53041at9989"/>
<dbReference type="PhylomeDB" id="P97708"/>
<dbReference type="PRO" id="PR:P97708"/>
<dbReference type="Proteomes" id="UP000002494">
    <property type="component" value="Unplaced"/>
</dbReference>
<dbReference type="GO" id="GO:0062023">
    <property type="term" value="C:collagen-containing extracellular matrix"/>
    <property type="evidence" value="ECO:0000250"/>
    <property type="project" value="UniProtKB"/>
</dbReference>
<dbReference type="GO" id="GO:0035805">
    <property type="term" value="C:egg coat"/>
    <property type="evidence" value="ECO:0000250"/>
    <property type="project" value="UniProtKB"/>
</dbReference>
<dbReference type="GO" id="GO:0031012">
    <property type="term" value="C:extracellular matrix"/>
    <property type="evidence" value="ECO:0000318"/>
    <property type="project" value="GO_Central"/>
</dbReference>
<dbReference type="GO" id="GO:0005615">
    <property type="term" value="C:extracellular space"/>
    <property type="evidence" value="ECO:0000250"/>
    <property type="project" value="UniProtKB"/>
</dbReference>
<dbReference type="GO" id="GO:0005886">
    <property type="term" value="C:plasma membrane"/>
    <property type="evidence" value="ECO:0000250"/>
    <property type="project" value="UniProtKB"/>
</dbReference>
<dbReference type="GO" id="GO:0032190">
    <property type="term" value="F:acrosin binding"/>
    <property type="evidence" value="ECO:0000266"/>
    <property type="project" value="RGD"/>
</dbReference>
<dbReference type="GO" id="GO:0030246">
    <property type="term" value="F:carbohydrate binding"/>
    <property type="evidence" value="ECO:0000250"/>
    <property type="project" value="UniProtKB"/>
</dbReference>
<dbReference type="GO" id="GO:0042802">
    <property type="term" value="F:identical protein binding"/>
    <property type="evidence" value="ECO:0000266"/>
    <property type="project" value="RGD"/>
</dbReference>
<dbReference type="GO" id="GO:0048018">
    <property type="term" value="F:receptor ligand activity"/>
    <property type="evidence" value="ECO:0000250"/>
    <property type="project" value="UniProtKB"/>
</dbReference>
<dbReference type="GO" id="GO:0035804">
    <property type="term" value="F:structural constituent of egg coat"/>
    <property type="evidence" value="ECO:0000250"/>
    <property type="project" value="UniProtKB"/>
</dbReference>
<dbReference type="GO" id="GO:0007339">
    <property type="term" value="P:binding of sperm to zona pellucida"/>
    <property type="evidence" value="ECO:0000250"/>
    <property type="project" value="UniProtKB"/>
</dbReference>
<dbReference type="GO" id="GO:0001825">
    <property type="term" value="P:blastocyst formation"/>
    <property type="evidence" value="ECO:0000250"/>
    <property type="project" value="UniProtKB"/>
</dbReference>
<dbReference type="GO" id="GO:0035803">
    <property type="term" value="P:egg coat formation"/>
    <property type="evidence" value="ECO:0000250"/>
    <property type="project" value="UniProtKB"/>
</dbReference>
<dbReference type="GO" id="GO:0002455">
    <property type="term" value="P:humoral immune response mediated by circulating immunoglobulin"/>
    <property type="evidence" value="ECO:0000250"/>
    <property type="project" value="UniProtKB"/>
</dbReference>
<dbReference type="GO" id="GO:2000360">
    <property type="term" value="P:negative regulation of binding of sperm to zona pellucida"/>
    <property type="evidence" value="ECO:0000250"/>
    <property type="project" value="UniProtKB"/>
</dbReference>
<dbReference type="GO" id="GO:0045892">
    <property type="term" value="P:negative regulation of DNA-templated transcription"/>
    <property type="evidence" value="ECO:0000250"/>
    <property type="project" value="UniProtKB"/>
</dbReference>
<dbReference type="GO" id="GO:0048599">
    <property type="term" value="P:oocyte development"/>
    <property type="evidence" value="ECO:0000250"/>
    <property type="project" value="UniProtKB"/>
</dbReference>
<dbReference type="GO" id="GO:2000368">
    <property type="term" value="P:positive regulation of acrosomal vesicle exocytosis"/>
    <property type="evidence" value="ECO:0000250"/>
    <property type="project" value="UniProtKB"/>
</dbReference>
<dbReference type="GO" id="GO:2000344">
    <property type="term" value="P:positive regulation of acrosome reaction"/>
    <property type="evidence" value="ECO:0000250"/>
    <property type="project" value="UniProtKB"/>
</dbReference>
<dbReference type="GO" id="GO:2000388">
    <property type="term" value="P:positive regulation of antral ovarian follicle growth"/>
    <property type="evidence" value="ECO:0000250"/>
    <property type="project" value="UniProtKB"/>
</dbReference>
<dbReference type="GO" id="GO:0045893">
    <property type="term" value="P:positive regulation of DNA-templated transcription"/>
    <property type="evidence" value="ECO:0000250"/>
    <property type="project" value="UniProtKB"/>
</dbReference>
<dbReference type="GO" id="GO:0002922">
    <property type="term" value="P:positive regulation of humoral immune response"/>
    <property type="evidence" value="ECO:0000250"/>
    <property type="project" value="UniProtKB"/>
</dbReference>
<dbReference type="GO" id="GO:0050729">
    <property type="term" value="P:positive regulation of inflammatory response"/>
    <property type="evidence" value="ECO:0000250"/>
    <property type="project" value="UniProtKB"/>
</dbReference>
<dbReference type="GO" id="GO:0032753">
    <property type="term" value="P:positive regulation of interleukin-4 production"/>
    <property type="evidence" value="ECO:0000250"/>
    <property type="project" value="UniProtKB"/>
</dbReference>
<dbReference type="GO" id="GO:0002687">
    <property type="term" value="P:positive regulation of leukocyte migration"/>
    <property type="evidence" value="ECO:0000250"/>
    <property type="project" value="UniProtKB"/>
</dbReference>
<dbReference type="GO" id="GO:2000386">
    <property type="term" value="P:positive regulation of ovarian follicle development"/>
    <property type="evidence" value="ECO:0000250"/>
    <property type="project" value="UniProtKB"/>
</dbReference>
<dbReference type="GO" id="GO:0042102">
    <property type="term" value="P:positive regulation of T cell proliferation"/>
    <property type="evidence" value="ECO:0000250"/>
    <property type="project" value="UniProtKB"/>
</dbReference>
<dbReference type="GO" id="GO:0032729">
    <property type="term" value="P:positive regulation of type II interferon production"/>
    <property type="evidence" value="ECO:0000250"/>
    <property type="project" value="UniProtKB"/>
</dbReference>
<dbReference type="GO" id="GO:0001809">
    <property type="term" value="P:positive regulation of type IV hypersensitivity"/>
    <property type="evidence" value="ECO:0000250"/>
    <property type="project" value="UniProtKB"/>
</dbReference>
<dbReference type="FunFam" id="2.60.40.3210:FF:000001">
    <property type="entry name" value="Zona pellucida sperm-binding protein 3"/>
    <property type="match status" value="1"/>
</dbReference>
<dbReference type="FunFam" id="2.60.40.4100:FF:000002">
    <property type="entry name" value="Zona pellucida sperm-binding protein 3"/>
    <property type="match status" value="1"/>
</dbReference>
<dbReference type="Gene3D" id="2.60.40.4100">
    <property type="entry name" value="Zona pellucida, ZP-C domain"/>
    <property type="match status" value="1"/>
</dbReference>
<dbReference type="Gene3D" id="2.60.40.3210">
    <property type="entry name" value="Zona pellucida, ZP-N domain"/>
    <property type="match status" value="1"/>
</dbReference>
<dbReference type="InterPro" id="IPR055355">
    <property type="entry name" value="ZP-C"/>
</dbReference>
<dbReference type="InterPro" id="IPR042235">
    <property type="entry name" value="ZP-C_dom"/>
</dbReference>
<dbReference type="InterPro" id="IPR055356">
    <property type="entry name" value="ZP-N"/>
</dbReference>
<dbReference type="InterPro" id="IPR048290">
    <property type="entry name" value="ZP_chr"/>
</dbReference>
<dbReference type="InterPro" id="IPR001507">
    <property type="entry name" value="ZP_dom"/>
</dbReference>
<dbReference type="InterPro" id="IPR017977">
    <property type="entry name" value="ZP_dom_CS"/>
</dbReference>
<dbReference type="PANTHER" id="PTHR11576">
    <property type="entry name" value="ZONA PELLUCIDA SPERM-BINDING PROTEIN 3"/>
    <property type="match status" value="1"/>
</dbReference>
<dbReference type="PANTHER" id="PTHR11576:SF2">
    <property type="entry name" value="ZONA PELLUCIDA SPERM-BINDING PROTEIN 3"/>
    <property type="match status" value="1"/>
</dbReference>
<dbReference type="Pfam" id="PF00100">
    <property type="entry name" value="Zona_pellucida"/>
    <property type="match status" value="1"/>
</dbReference>
<dbReference type="Pfam" id="PF23344">
    <property type="entry name" value="ZP-N"/>
    <property type="match status" value="1"/>
</dbReference>
<dbReference type="PRINTS" id="PR00023">
    <property type="entry name" value="ZPELLUCIDA"/>
</dbReference>
<dbReference type="SMART" id="SM00241">
    <property type="entry name" value="ZP"/>
    <property type="match status" value="1"/>
</dbReference>
<dbReference type="PROSITE" id="PS00682">
    <property type="entry name" value="ZP_1"/>
    <property type="match status" value="1"/>
</dbReference>
<dbReference type="PROSITE" id="PS51034">
    <property type="entry name" value="ZP_2"/>
    <property type="match status" value="1"/>
</dbReference>
<sequence length="424" mass="45901">MGPSCLLFLCLLLCGGPELCYPQTQWLLPGGTPTPAGSSSPVEVECKEAELVVTVRRDLFGTGKLVQPGDLTLGSEGCQPLVAVDTDVVRLNAQLHECSSGVQVTEDALVYNTFLLHDPRPVNGLSILRTNRVEVPIECRYPRQGNVSSHPIQPTWVPFSATVSSEEKLAFSLRLMEEDWNTEKSSPTFHLGEVAHLQAEVQTGSHLPLQLFVDHCVATPSPLPGQNSSPHHFIVDSHGCLVDGLSESFSAFQVPRPRPETLQFTVDVFHFANSSRNTVYITCHLKVAPANQIPDKLNKACSFNKTSQSWLPVEGDADICDCCSNGNCSNSSSSEFETHEPAQWSTLVSRNRRHVTDEADVTVGPLIFLGKANDQAVEGWTSSAQTSVALGLGLATVAFLTLAAIVLGVTRKCHTSSYLVSLPQ</sequence>
<keyword id="KW-1003">Cell membrane</keyword>
<keyword id="KW-0165">Cleavage on pair of basic residues</keyword>
<keyword id="KW-0903">Direct protein sequencing</keyword>
<keyword id="KW-1015">Disulfide bond</keyword>
<keyword id="KW-0272">Extracellular matrix</keyword>
<keyword id="KW-0278">Fertilization</keyword>
<keyword id="KW-0325">Glycoprotein</keyword>
<keyword id="KW-0472">Membrane</keyword>
<keyword id="KW-0873">Pyrrolidone carboxylic acid</keyword>
<keyword id="KW-0675">Receptor</keyword>
<keyword id="KW-1185">Reference proteome</keyword>
<keyword id="KW-0964">Secreted</keyword>
<keyword id="KW-0732">Signal</keyword>
<keyword id="KW-0812">Transmembrane</keyword>
<keyword id="KW-1133">Transmembrane helix</keyword>
<protein>
    <recommendedName>
        <fullName>Zona pellucida sperm-binding protein 3</fullName>
    </recommendedName>
    <alternativeName>
        <fullName>Zona pellucida glycoprotein 3</fullName>
        <shortName>Zp-3</shortName>
    </alternativeName>
    <alternativeName>
        <fullName>Zona pellucida protein C</fullName>
    </alternativeName>
    <component>
        <recommendedName>
            <fullName>Processed zona pellucida sperm-binding protein 3</fullName>
        </recommendedName>
    </component>
</protein>
<comment type="function">
    <text>Component of the zona pellucida, an extracellular matrix surrounding oocytes which mediates sperm binding, induction of the acrosome reaction and prevents post-fertilization polyspermy. The zona pellucida is composed of 3 to 4 glycoproteins, ZP1, ZP2, ZP3, and ZP4. ZP3 is essential for sperm binding and zona matrix formation.</text>
</comment>
<comment type="subunit">
    <text evidence="2 3">Polymers of ZP2 and ZP3 organized into long filaments cross-linked by ZP1 homodimers. Interacts with ZP1 and ZP2.</text>
</comment>
<comment type="subcellular location">
    <molecule>Processed zona pellucida sperm-binding protein 3</molecule>
    <subcellularLocation>
        <location evidence="3">Zona pellucida</location>
    </subcellularLocation>
</comment>
<comment type="subcellular location">
    <subcellularLocation>
        <location evidence="4">Cell membrane</location>
        <topology evidence="5">Single-pass type I membrane protein</topology>
    </subcellularLocation>
</comment>
<comment type="tissue specificity">
    <text>Expressed in oocytes.</text>
</comment>
<comment type="domain">
    <text>The ZP domain is involved in the polymerization of the ZP proteins to form the zona pellucida.</text>
</comment>
<comment type="PTM">
    <text>Proteolytically cleaved before the transmembrane segment to yield the secreted ectodomain incorporated in the zona pellucida.</text>
</comment>
<comment type="PTM">
    <text>N-glycosylated; N-linked glycans are of high mannose/hybrid type, as well as bi-, tri- and tetra-antennary complex types.</text>
</comment>
<comment type="PTM">
    <text>O-glycosylated; removal of O-linked glycans may play an important role in the post-fertilization block to polyspermy.</text>
</comment>
<comment type="similarity">
    <text evidence="8">Belongs to the ZP domain family. ZPC subfamily.</text>
</comment>
<comment type="online information" name="Protein Spotlight">
    <link uri="https://www.proteinspotlight.org/back_issues/093"/>
    <text>Molecular chastity - Issue 93 of April 2008</text>
</comment>
<proteinExistence type="evidence at protein level"/>